<proteinExistence type="inferred from homology"/>
<name>PURA_CAEEL</name>
<reference key="1">
    <citation type="journal article" date="1998" name="Science">
        <title>Genome sequence of the nematode C. elegans: a platform for investigating biology.</title>
        <authorList>
            <consortium name="The C. elegans sequencing consortium"/>
        </authorList>
    </citation>
    <scope>NUCLEOTIDE SEQUENCE [LARGE SCALE GENOMIC DNA]</scope>
    <source>
        <strain>Bristol N2</strain>
    </source>
</reference>
<organism>
    <name type="scientific">Caenorhabditis elegans</name>
    <dbReference type="NCBI Taxonomy" id="6239"/>
    <lineage>
        <taxon>Eukaryota</taxon>
        <taxon>Metazoa</taxon>
        <taxon>Ecdysozoa</taxon>
        <taxon>Nematoda</taxon>
        <taxon>Chromadorea</taxon>
        <taxon>Rhabditida</taxon>
        <taxon>Rhabditina</taxon>
        <taxon>Rhabditomorpha</taxon>
        <taxon>Rhabditoidea</taxon>
        <taxon>Rhabditidae</taxon>
        <taxon>Peloderinae</taxon>
        <taxon>Caenorhabditis</taxon>
    </lineage>
</organism>
<feature type="chain" id="PRO_0000095134" description="Adenylosuccinate synthetase">
    <location>
        <begin position="1"/>
        <end position="457"/>
    </location>
</feature>
<feature type="active site" description="Proton acceptor" evidence="1">
    <location>
        <position position="41"/>
    </location>
</feature>
<feature type="active site" description="Proton donor" evidence="1">
    <location>
        <position position="71"/>
    </location>
</feature>
<feature type="binding site" evidence="1">
    <location>
        <begin position="40"/>
        <end position="46"/>
    </location>
    <ligand>
        <name>GTP</name>
        <dbReference type="ChEBI" id="CHEBI:37565"/>
    </ligand>
</feature>
<feature type="binding site" description="in other chain" evidence="1">
    <location>
        <begin position="41"/>
        <end position="44"/>
    </location>
    <ligand>
        <name>IMP</name>
        <dbReference type="ChEBI" id="CHEBI:58053"/>
        <note>ligand shared between dimeric partners</note>
    </ligand>
</feature>
<feature type="binding site" evidence="1">
    <location>
        <position position="41"/>
    </location>
    <ligand>
        <name>Mg(2+)</name>
        <dbReference type="ChEBI" id="CHEBI:18420"/>
    </ligand>
</feature>
<feature type="binding site" description="in other chain" evidence="1">
    <location>
        <begin position="68"/>
        <end position="71"/>
    </location>
    <ligand>
        <name>IMP</name>
        <dbReference type="ChEBI" id="CHEBI:58053"/>
        <note>ligand shared between dimeric partners</note>
    </ligand>
</feature>
<feature type="binding site" evidence="1">
    <location>
        <begin position="70"/>
        <end position="72"/>
    </location>
    <ligand>
        <name>GTP</name>
        <dbReference type="ChEBI" id="CHEBI:37565"/>
    </ligand>
</feature>
<feature type="binding site" evidence="1">
    <location>
        <position position="70"/>
    </location>
    <ligand>
        <name>Mg(2+)</name>
        <dbReference type="ChEBI" id="CHEBI:18420"/>
    </ligand>
</feature>
<feature type="binding site" description="in other chain" evidence="1">
    <location>
        <position position="161"/>
    </location>
    <ligand>
        <name>IMP</name>
        <dbReference type="ChEBI" id="CHEBI:58053"/>
        <note>ligand shared between dimeric partners</note>
    </ligand>
</feature>
<feature type="binding site" evidence="1">
    <location>
        <position position="175"/>
    </location>
    <ligand>
        <name>IMP</name>
        <dbReference type="ChEBI" id="CHEBI:58053"/>
        <note>ligand shared between dimeric partners</note>
    </ligand>
</feature>
<feature type="binding site" description="in other chain" evidence="1">
    <location>
        <position position="255"/>
    </location>
    <ligand>
        <name>IMP</name>
        <dbReference type="ChEBI" id="CHEBI:58053"/>
        <note>ligand shared between dimeric partners</note>
    </ligand>
</feature>
<feature type="binding site" description="in other chain" evidence="1">
    <location>
        <position position="270"/>
    </location>
    <ligand>
        <name>IMP</name>
        <dbReference type="ChEBI" id="CHEBI:58053"/>
        <note>ligand shared between dimeric partners</note>
    </ligand>
</feature>
<feature type="binding site" evidence="1">
    <location>
        <begin position="330"/>
        <end position="336"/>
    </location>
    <ligand>
        <name>substrate</name>
    </ligand>
</feature>
<feature type="binding site" description="in other chain" evidence="1">
    <location>
        <position position="334"/>
    </location>
    <ligand>
        <name>IMP</name>
        <dbReference type="ChEBI" id="CHEBI:58053"/>
        <note>ligand shared between dimeric partners</note>
    </ligand>
</feature>
<feature type="binding site" evidence="1">
    <location>
        <position position="336"/>
    </location>
    <ligand>
        <name>GTP</name>
        <dbReference type="ChEBI" id="CHEBI:37565"/>
    </ligand>
</feature>
<feature type="binding site" evidence="1">
    <location>
        <begin position="362"/>
        <end position="364"/>
    </location>
    <ligand>
        <name>GTP</name>
        <dbReference type="ChEBI" id="CHEBI:37565"/>
    </ligand>
</feature>
<feature type="binding site" evidence="1">
    <location>
        <begin position="444"/>
        <end position="446"/>
    </location>
    <ligand>
        <name>GTP</name>
        <dbReference type="ChEBI" id="CHEBI:37565"/>
    </ligand>
</feature>
<feature type="splice variant" id="VSP_039823" description="In isoform b." evidence="2">
    <location>
        <begin position="1"/>
        <end position="23"/>
    </location>
</feature>
<evidence type="ECO:0000255" key="1">
    <source>
        <dbReference type="HAMAP-Rule" id="MF_03125"/>
    </source>
</evidence>
<evidence type="ECO:0000305" key="2"/>
<evidence type="ECO:0000312" key="3">
    <source>
        <dbReference type="WormBase" id="C37H5.6a"/>
    </source>
</evidence>
<sequence length="457" mass="50161">MGSVTSKTNDELESFLNKRLGGSMTSSNKTVSVLLGAQWGDEGKGKIIDYLIENHKINVTARCQGGNNAGHTVVANGRKYDFHILPSGIISPTCFNVIGNGVVVNLDAFFSELAHNGILEESGWEKRIMISSEAHLVFGVHSQVDGRQEDSLAAKNKIGTTNRGIGPTYSSKCFRNGIRVADLMADFEEFSEKYRRLVEHYKKQFPSIEVNVDEELAKFKQHREKLAELKLVGDTVGFIHEQRNAGKQVLVEGANGALLDIDFGTYPYVTSSNSTVGGACTGIGVPPTAVGNVIGVVKAYQTRVGTGPFPTELFDSDGEKLQTIGKEVGVTTGRKRRCGWIDLFLLRRSAMINGYTAIALTKLDILDTFPTIKVAVGYKLNGQVLSSPPAQANAWGAIEVEYKEFEGWNEPTVGVRKFEDLPEKCRQYVKFIEDFIKVPIVYIGVGAERESLIVRQQ</sequence>
<dbReference type="EC" id="6.3.4.4" evidence="1"/>
<dbReference type="EMBL" id="FO080813">
    <property type="protein sequence ID" value="CCD66985.1"/>
    <property type="molecule type" value="Genomic_DNA"/>
</dbReference>
<dbReference type="EMBL" id="FO080813">
    <property type="protein sequence ID" value="CCD66986.1"/>
    <property type="molecule type" value="Genomic_DNA"/>
</dbReference>
<dbReference type="PIR" id="T25612">
    <property type="entry name" value="T25612"/>
</dbReference>
<dbReference type="RefSeq" id="NP_001379789.1">
    <molecule id="P91134-2"/>
    <property type="nucleotide sequence ID" value="NM_001392504.1"/>
</dbReference>
<dbReference type="RefSeq" id="NP_741529.1">
    <molecule id="P91134-1"/>
    <property type="nucleotide sequence ID" value="NM_171450.3"/>
</dbReference>
<dbReference type="RefSeq" id="NP_741530.1">
    <property type="nucleotide sequence ID" value="NM_171451.3"/>
</dbReference>
<dbReference type="SMR" id="P91134"/>
<dbReference type="BioGRID" id="43922">
    <property type="interactions" value="31"/>
</dbReference>
<dbReference type="FunCoup" id="P91134">
    <property type="interactions" value="2385"/>
</dbReference>
<dbReference type="STRING" id="6239.C37H5.6a.1"/>
<dbReference type="PaxDb" id="6239-C37H5.6a"/>
<dbReference type="PeptideAtlas" id="P91134"/>
<dbReference type="EnsemblMetazoa" id="C37H5.6a.1">
    <molecule id="P91134-1"/>
    <property type="protein sequence ID" value="C37H5.6a.1"/>
    <property type="gene ID" value="WBGene00016509"/>
</dbReference>
<dbReference type="EnsemblMetazoa" id="C37H5.6b.1">
    <molecule id="P91134-2"/>
    <property type="protein sequence ID" value="C37H5.6b.1"/>
    <property type="gene ID" value="WBGene00016509"/>
</dbReference>
<dbReference type="GeneID" id="178872"/>
<dbReference type="KEGG" id="cel:CELE_C37H5.6"/>
<dbReference type="UCSC" id="C37H5.6b.1">
    <property type="organism name" value="c. elegans"/>
</dbReference>
<dbReference type="AGR" id="WB:WBGene00016509"/>
<dbReference type="CTD" id="178872"/>
<dbReference type="WormBase" id="C37H5.6a">
    <molecule id="P91134-1"/>
    <property type="protein sequence ID" value="CE08630"/>
    <property type="gene ID" value="WBGene00016509"/>
    <property type="gene designation" value="adss-1"/>
</dbReference>
<dbReference type="WormBase" id="C37H5.6b">
    <molecule id="P91134-2"/>
    <property type="protein sequence ID" value="CE29709"/>
    <property type="gene ID" value="WBGene00016509"/>
    <property type="gene designation" value="adss-1"/>
</dbReference>
<dbReference type="eggNOG" id="KOG1355">
    <property type="taxonomic scope" value="Eukaryota"/>
</dbReference>
<dbReference type="GeneTree" id="ENSGT00390000015553"/>
<dbReference type="InParanoid" id="P91134"/>
<dbReference type="OMA" id="QSYVRFL"/>
<dbReference type="OrthoDB" id="10265645at2759"/>
<dbReference type="PhylomeDB" id="P91134"/>
<dbReference type="Reactome" id="R-CEL-73817">
    <property type="pathway name" value="Purine ribonucleoside monophosphate biosynthesis"/>
</dbReference>
<dbReference type="UniPathway" id="UPA00075">
    <property type="reaction ID" value="UER00335"/>
</dbReference>
<dbReference type="PRO" id="PR:P91134"/>
<dbReference type="Proteomes" id="UP000001940">
    <property type="component" value="Chromosome V"/>
</dbReference>
<dbReference type="Bgee" id="WBGene00016509">
    <property type="expression patterns" value="Expressed in larva and 4 other cell types or tissues"/>
</dbReference>
<dbReference type="GO" id="GO:0005737">
    <property type="term" value="C:cytoplasm"/>
    <property type="evidence" value="ECO:0000318"/>
    <property type="project" value="GO_Central"/>
</dbReference>
<dbReference type="GO" id="GO:0004019">
    <property type="term" value="F:adenylosuccinate synthase activity"/>
    <property type="evidence" value="ECO:0000318"/>
    <property type="project" value="GO_Central"/>
</dbReference>
<dbReference type="GO" id="GO:0005525">
    <property type="term" value="F:GTP binding"/>
    <property type="evidence" value="ECO:0007669"/>
    <property type="project" value="UniProtKB-UniRule"/>
</dbReference>
<dbReference type="GO" id="GO:0000287">
    <property type="term" value="F:magnesium ion binding"/>
    <property type="evidence" value="ECO:0007669"/>
    <property type="project" value="UniProtKB-UniRule"/>
</dbReference>
<dbReference type="GO" id="GO:0044208">
    <property type="term" value="P:'de novo' AMP biosynthetic process"/>
    <property type="evidence" value="ECO:0000318"/>
    <property type="project" value="GO_Central"/>
</dbReference>
<dbReference type="GO" id="GO:0046040">
    <property type="term" value="P:IMP metabolic process"/>
    <property type="evidence" value="ECO:0000318"/>
    <property type="project" value="GO_Central"/>
</dbReference>
<dbReference type="CDD" id="cd03108">
    <property type="entry name" value="AdSS"/>
    <property type="match status" value="1"/>
</dbReference>
<dbReference type="FunFam" id="3.90.170.10:FF:000001">
    <property type="entry name" value="Adenylosuccinate synthetase"/>
    <property type="match status" value="1"/>
</dbReference>
<dbReference type="FunFam" id="1.10.300.10:FF:000002">
    <property type="entry name" value="Adenylosuccinate synthetase, chloroplastic"/>
    <property type="match status" value="1"/>
</dbReference>
<dbReference type="Gene3D" id="3.40.440.10">
    <property type="entry name" value="Adenylosuccinate Synthetase, subunit A, domain 1"/>
    <property type="match status" value="1"/>
</dbReference>
<dbReference type="Gene3D" id="1.10.300.10">
    <property type="entry name" value="Adenylosuccinate Synthetase, subunit A, domain 2"/>
    <property type="match status" value="1"/>
</dbReference>
<dbReference type="Gene3D" id="3.90.170.10">
    <property type="entry name" value="Adenylosuccinate Synthetase, subunit A, domain 3"/>
    <property type="match status" value="1"/>
</dbReference>
<dbReference type="HAMAP" id="MF_00011">
    <property type="entry name" value="Adenylosucc_synth"/>
    <property type="match status" value="1"/>
</dbReference>
<dbReference type="InterPro" id="IPR018220">
    <property type="entry name" value="Adenylosuccin_syn_GTP-bd"/>
</dbReference>
<dbReference type="InterPro" id="IPR033128">
    <property type="entry name" value="Adenylosuccin_syn_Lys_AS"/>
</dbReference>
<dbReference type="InterPro" id="IPR042109">
    <property type="entry name" value="Adenylosuccinate_synth_dom1"/>
</dbReference>
<dbReference type="InterPro" id="IPR042110">
    <property type="entry name" value="Adenylosuccinate_synth_dom2"/>
</dbReference>
<dbReference type="InterPro" id="IPR042111">
    <property type="entry name" value="Adenylosuccinate_synth_dom3"/>
</dbReference>
<dbReference type="InterPro" id="IPR001114">
    <property type="entry name" value="Adenylosuccinate_synthetase"/>
</dbReference>
<dbReference type="InterPro" id="IPR027417">
    <property type="entry name" value="P-loop_NTPase"/>
</dbReference>
<dbReference type="NCBIfam" id="NF002223">
    <property type="entry name" value="PRK01117.1"/>
    <property type="match status" value="1"/>
</dbReference>
<dbReference type="NCBIfam" id="TIGR00184">
    <property type="entry name" value="purA"/>
    <property type="match status" value="1"/>
</dbReference>
<dbReference type="PANTHER" id="PTHR11846">
    <property type="entry name" value="ADENYLOSUCCINATE SYNTHETASE"/>
    <property type="match status" value="1"/>
</dbReference>
<dbReference type="PANTHER" id="PTHR11846:SF0">
    <property type="entry name" value="ADENYLOSUCCINATE SYNTHETASE"/>
    <property type="match status" value="1"/>
</dbReference>
<dbReference type="Pfam" id="PF00709">
    <property type="entry name" value="Adenylsucc_synt"/>
    <property type="match status" value="1"/>
</dbReference>
<dbReference type="SMART" id="SM00788">
    <property type="entry name" value="Adenylsucc_synt"/>
    <property type="match status" value="1"/>
</dbReference>
<dbReference type="SUPFAM" id="SSF52540">
    <property type="entry name" value="P-loop containing nucleoside triphosphate hydrolases"/>
    <property type="match status" value="1"/>
</dbReference>
<dbReference type="PROSITE" id="PS01266">
    <property type="entry name" value="ADENYLOSUCCIN_SYN_1"/>
    <property type="match status" value="1"/>
</dbReference>
<dbReference type="PROSITE" id="PS00513">
    <property type="entry name" value="ADENYLOSUCCIN_SYN_2"/>
    <property type="match status" value="1"/>
</dbReference>
<gene>
    <name evidence="3" type="primary">adss-1</name>
    <name evidence="3" type="ORF">C37H5.6</name>
</gene>
<accession>P91134</accession>
<accession>Q8MNS2</accession>
<keyword id="KW-0024">Alternative initiation</keyword>
<keyword id="KW-0963">Cytoplasm</keyword>
<keyword id="KW-0342">GTP-binding</keyword>
<keyword id="KW-0436">Ligase</keyword>
<keyword id="KW-0460">Magnesium</keyword>
<keyword id="KW-0479">Metal-binding</keyword>
<keyword id="KW-0547">Nucleotide-binding</keyword>
<keyword id="KW-0658">Purine biosynthesis</keyword>
<keyword id="KW-1185">Reference proteome</keyword>
<comment type="function">
    <text evidence="1">Plays an important role in the de novo pathway and in the salvage pathway of purine nucleotide biosynthesis. Catalyzes the first committed step in the biosynthesis of AMP from IMP.</text>
</comment>
<comment type="catalytic activity">
    <reaction evidence="1">
        <text>IMP + L-aspartate + GTP = N(6)-(1,2-dicarboxyethyl)-AMP + GDP + phosphate + 2 H(+)</text>
        <dbReference type="Rhea" id="RHEA:15753"/>
        <dbReference type="ChEBI" id="CHEBI:15378"/>
        <dbReference type="ChEBI" id="CHEBI:29991"/>
        <dbReference type="ChEBI" id="CHEBI:37565"/>
        <dbReference type="ChEBI" id="CHEBI:43474"/>
        <dbReference type="ChEBI" id="CHEBI:57567"/>
        <dbReference type="ChEBI" id="CHEBI:58053"/>
        <dbReference type="ChEBI" id="CHEBI:58189"/>
        <dbReference type="EC" id="6.3.4.4"/>
    </reaction>
</comment>
<comment type="cofactor">
    <cofactor evidence="1">
        <name>Mg(2+)</name>
        <dbReference type="ChEBI" id="CHEBI:18420"/>
    </cofactor>
    <text evidence="1">Binds 1 Mg(2+) ion per subunit.</text>
</comment>
<comment type="pathway">
    <text evidence="1">Purine metabolism; AMP biosynthesis via de novo pathway; AMP from IMP: step 1/2.</text>
</comment>
<comment type="subunit">
    <text evidence="1">Homodimer.</text>
</comment>
<comment type="subcellular location">
    <subcellularLocation>
        <location evidence="1">Cytoplasm</location>
    </subcellularLocation>
</comment>
<comment type="alternative products">
    <event type="alternative initiation"/>
    <isoform>
        <id>P91134-1</id>
        <name>a</name>
        <sequence type="displayed"/>
    </isoform>
    <isoform>
        <id>P91134-2</id>
        <name>b</name>
        <sequence type="described" ref="VSP_039823"/>
    </isoform>
</comment>
<comment type="similarity">
    <text evidence="1">Belongs to the adenylosuccinate synthetase family.</text>
</comment>
<protein>
    <recommendedName>
        <fullName evidence="1">Adenylosuccinate synthetase</fullName>
        <shortName evidence="1">AMPSase</shortName>
        <shortName evidence="1">AdSS</shortName>
        <ecNumber evidence="1">6.3.4.4</ecNumber>
    </recommendedName>
    <alternativeName>
        <fullName evidence="1">IMP--aspartate ligase</fullName>
    </alternativeName>
</protein>